<evidence type="ECO:0000250" key="1">
    <source>
        <dbReference type="UniProtKB" id="Q0E940"/>
    </source>
</evidence>
<evidence type="ECO:0000255" key="2">
    <source>
        <dbReference type="HAMAP-Rule" id="MF_03001"/>
    </source>
</evidence>
<evidence type="ECO:0000256" key="3">
    <source>
        <dbReference type="SAM" id="MobiDB-lite"/>
    </source>
</evidence>
<proteinExistence type="inferred from homology"/>
<name>EIF3B_DROYA</name>
<keyword id="KW-0175">Coiled coil</keyword>
<keyword id="KW-0963">Cytoplasm</keyword>
<keyword id="KW-0396">Initiation factor</keyword>
<keyword id="KW-0648">Protein biosynthesis</keyword>
<keyword id="KW-0677">Repeat</keyword>
<keyword id="KW-0694">RNA-binding</keyword>
<keyword id="KW-0853">WD repeat</keyword>
<accession>B4P5F7</accession>
<protein>
    <recommendedName>
        <fullName evidence="2">Eukaryotic translation initiation factor 3 subunit B</fullName>
        <shortName evidence="2">eIF3b</shortName>
    </recommendedName>
    <alternativeName>
        <fullName evidence="2">Eukaryotic translation initiation factor 3 subunit 9</fullName>
    </alternativeName>
</protein>
<reference key="1">
    <citation type="journal article" date="2007" name="Nature">
        <title>Evolution of genes and genomes on the Drosophila phylogeny.</title>
        <authorList>
            <consortium name="Drosophila 12 genomes consortium"/>
        </authorList>
    </citation>
    <scope>NUCLEOTIDE SEQUENCE [LARGE SCALE GENOMIC DNA]</scope>
    <source>
        <strain>Tai18E2 / Tucson 14021-0261.01</strain>
    </source>
</reference>
<sequence>MAKKKSEEHSGADANDSDYQEEPNFEDPPGFVDNISDEDLLGDMLAQRPSEADGVESVVVVDNIPKVEPERLDKLKSVINKLFSNYGDIVNVVYPVDEDGKTKGYAFMEYKQASQAEEAVKKLNNHRLDKNHTFAVNLFTDFQKYENIPEKWEPPTVQTFKVQSDLYNFINDPDTYDQYCVAAETAQNCVQVGFWQNVLPEPFELETRERFTDTFVKWSPLGTYVVTFHKPGVAIWGGSSFQKIQKFPHPGTQFVEFSPCENYLVTYGPTPTGQKIIIWDIRTGAEKRSFVADGMSVLSMFRWSHDDKFVARMGENSIHIYETPSFFLLDLKSIKIPGIRGFSWSPTDNVIAYWVEEQNQIPARVTLMEIPKKREIRNKNLFHVADCKLHWQKSGDYLCVKVDRYSKLKKDKKDLDVKFLGMFYNFEIFHMREKEIPVDSVEIRELILAFAWEPIGNKFSIIHGEPNSSNVSFYEVNKGVKPSLVKRLEKKSCTHLFWSPRGQFIVMANLTMGTFEFVDSTNDYIISASPDHFRASEVEWDPTGRYVVTGVSSWKVKEDTGFNMYTFQGRIIKRTILKNFVQFLWRPRPPTLLSEEKQKEIKKNLKKYYAAFEQKDRLRLTRASKELLEKRSQLRETFMEYRNKRIAEWADQKSRRIMLRGHVDTDNLETDEVDEEIVEFLVKEEVTLLE</sequence>
<feature type="chain" id="PRO_0000363805" description="Eukaryotic translation initiation factor 3 subunit B">
    <location>
        <begin position="1"/>
        <end position="690"/>
    </location>
</feature>
<feature type="domain" description="RRM" evidence="2">
    <location>
        <begin position="57"/>
        <end position="141"/>
    </location>
</feature>
<feature type="repeat" description="WD 1">
    <location>
        <begin position="207"/>
        <end position="246"/>
    </location>
</feature>
<feature type="repeat" description="WD 2">
    <location>
        <begin position="293"/>
        <end position="331"/>
    </location>
</feature>
<feature type="repeat" description="WD 3">
    <location>
        <begin position="334"/>
        <end position="369"/>
    </location>
</feature>
<feature type="repeat" description="WD 4">
    <location>
        <begin position="442"/>
        <end position="484"/>
    </location>
</feature>
<feature type="repeat" description="WD 5">
    <location>
        <begin position="530"/>
        <end position="575"/>
    </location>
</feature>
<feature type="region of interest" description="Disordered" evidence="3">
    <location>
        <begin position="1"/>
        <end position="36"/>
    </location>
</feature>
<feature type="coiled-coil region" evidence="2">
    <location>
        <begin position="595"/>
        <end position="645"/>
    </location>
</feature>
<feature type="compositionally biased region" description="Basic and acidic residues" evidence="3">
    <location>
        <begin position="1"/>
        <end position="11"/>
    </location>
</feature>
<feature type="compositionally biased region" description="Acidic residues" evidence="3">
    <location>
        <begin position="15"/>
        <end position="25"/>
    </location>
</feature>
<gene>
    <name evidence="2" type="primary">eIF3b</name>
    <name evidence="2" type="synonym">eIF3-S9</name>
    <name type="ORF">GE11867</name>
</gene>
<organism>
    <name type="scientific">Drosophila yakuba</name>
    <name type="common">Fruit fly</name>
    <dbReference type="NCBI Taxonomy" id="7245"/>
    <lineage>
        <taxon>Eukaryota</taxon>
        <taxon>Metazoa</taxon>
        <taxon>Ecdysozoa</taxon>
        <taxon>Arthropoda</taxon>
        <taxon>Hexapoda</taxon>
        <taxon>Insecta</taxon>
        <taxon>Pterygota</taxon>
        <taxon>Neoptera</taxon>
        <taxon>Endopterygota</taxon>
        <taxon>Diptera</taxon>
        <taxon>Brachycera</taxon>
        <taxon>Muscomorpha</taxon>
        <taxon>Ephydroidea</taxon>
        <taxon>Drosophilidae</taxon>
        <taxon>Drosophila</taxon>
        <taxon>Sophophora</taxon>
    </lineage>
</organism>
<dbReference type="EMBL" id="CM000158">
    <property type="protein sequence ID" value="EDW91788.1"/>
    <property type="molecule type" value="Genomic_DNA"/>
</dbReference>
<dbReference type="SMR" id="B4P5F7"/>
<dbReference type="EnsemblMetazoa" id="FBtr0258385">
    <property type="protein sequence ID" value="FBpp0256877"/>
    <property type="gene ID" value="FBgn0229653"/>
</dbReference>
<dbReference type="EnsemblMetazoa" id="XM_002092040.4">
    <property type="protein sequence ID" value="XP_002092076.1"/>
    <property type="gene ID" value="LOC6531267"/>
</dbReference>
<dbReference type="GeneID" id="6531267"/>
<dbReference type="KEGG" id="dya:Dyak_GE11867"/>
<dbReference type="CTD" id="8662"/>
<dbReference type="eggNOG" id="KOG2314">
    <property type="taxonomic scope" value="Eukaryota"/>
</dbReference>
<dbReference type="HOGENOM" id="CLU_011152_1_0_1"/>
<dbReference type="OMA" id="LWGGPQF"/>
<dbReference type="OrthoDB" id="10250414at2759"/>
<dbReference type="PhylomeDB" id="B4P5F7"/>
<dbReference type="Proteomes" id="UP000002282">
    <property type="component" value="Chromosome 2R"/>
</dbReference>
<dbReference type="GO" id="GO:0016282">
    <property type="term" value="C:eukaryotic 43S preinitiation complex"/>
    <property type="evidence" value="ECO:0007669"/>
    <property type="project" value="UniProtKB-UniRule"/>
</dbReference>
<dbReference type="GO" id="GO:0033290">
    <property type="term" value="C:eukaryotic 48S preinitiation complex"/>
    <property type="evidence" value="ECO:0007669"/>
    <property type="project" value="UniProtKB-UniRule"/>
</dbReference>
<dbReference type="GO" id="GO:0005852">
    <property type="term" value="C:eukaryotic translation initiation factor 3 complex"/>
    <property type="evidence" value="ECO:0000250"/>
    <property type="project" value="UniProtKB"/>
</dbReference>
<dbReference type="GO" id="GO:0003723">
    <property type="term" value="F:RNA binding"/>
    <property type="evidence" value="ECO:0007669"/>
    <property type="project" value="UniProtKB-UniRule"/>
</dbReference>
<dbReference type="GO" id="GO:0003743">
    <property type="term" value="F:translation initiation factor activity"/>
    <property type="evidence" value="ECO:0000250"/>
    <property type="project" value="UniProtKB"/>
</dbReference>
<dbReference type="GO" id="GO:0031369">
    <property type="term" value="F:translation initiation factor binding"/>
    <property type="evidence" value="ECO:0007669"/>
    <property type="project" value="InterPro"/>
</dbReference>
<dbReference type="GO" id="GO:0030707">
    <property type="term" value="P:follicle cell of egg chamber development"/>
    <property type="evidence" value="ECO:0007669"/>
    <property type="project" value="EnsemblMetazoa"/>
</dbReference>
<dbReference type="GO" id="GO:0001732">
    <property type="term" value="P:formation of cytoplasmic translation initiation complex"/>
    <property type="evidence" value="ECO:0007669"/>
    <property type="project" value="UniProtKB-UniRule"/>
</dbReference>
<dbReference type="GO" id="GO:0006446">
    <property type="term" value="P:regulation of translational initiation"/>
    <property type="evidence" value="ECO:0000250"/>
    <property type="project" value="UniProtKB"/>
</dbReference>
<dbReference type="CDD" id="cd12278">
    <property type="entry name" value="RRM_eIF3B"/>
    <property type="match status" value="1"/>
</dbReference>
<dbReference type="FunFam" id="2.130.10.10:FF:000884">
    <property type="entry name" value="Eukaryotic translation initiation factor 3 subunit B"/>
    <property type="match status" value="1"/>
</dbReference>
<dbReference type="FunFam" id="3.30.70.330:FF:000607">
    <property type="entry name" value="Eukaryotic translation initiation factor 3 subunit B"/>
    <property type="match status" value="1"/>
</dbReference>
<dbReference type="Gene3D" id="3.30.70.330">
    <property type="match status" value="1"/>
</dbReference>
<dbReference type="Gene3D" id="2.130.10.10">
    <property type="entry name" value="YVTN repeat-like/Quinoprotein amine dehydrogenase"/>
    <property type="match status" value="1"/>
</dbReference>
<dbReference type="HAMAP" id="MF_03001">
    <property type="entry name" value="eIF3b"/>
    <property type="match status" value="1"/>
</dbReference>
<dbReference type="InterPro" id="IPR011400">
    <property type="entry name" value="EIF3B"/>
</dbReference>
<dbReference type="InterPro" id="IPR034363">
    <property type="entry name" value="eIF3B_RRM"/>
</dbReference>
<dbReference type="InterPro" id="IPR012677">
    <property type="entry name" value="Nucleotide-bd_a/b_plait_sf"/>
</dbReference>
<dbReference type="InterPro" id="IPR035979">
    <property type="entry name" value="RBD_domain_sf"/>
</dbReference>
<dbReference type="InterPro" id="IPR000504">
    <property type="entry name" value="RRM_dom"/>
</dbReference>
<dbReference type="InterPro" id="IPR013979">
    <property type="entry name" value="TIF_beta_prop-like"/>
</dbReference>
<dbReference type="InterPro" id="IPR015943">
    <property type="entry name" value="WD40/YVTN_repeat-like_dom_sf"/>
</dbReference>
<dbReference type="PANTHER" id="PTHR14068">
    <property type="entry name" value="EUKARYOTIC TRANSLATION INITIATION FACTOR 3 EIF3 -RELATED"/>
    <property type="match status" value="1"/>
</dbReference>
<dbReference type="PANTHER" id="PTHR14068:SF0">
    <property type="entry name" value="EUKARYOTIC TRANSLATION INITIATION FACTOR 3 SUBUNIT B"/>
    <property type="match status" value="1"/>
</dbReference>
<dbReference type="Pfam" id="PF08662">
    <property type="entry name" value="eIF2A"/>
    <property type="match status" value="1"/>
</dbReference>
<dbReference type="Pfam" id="PF00076">
    <property type="entry name" value="RRM_1"/>
    <property type="match status" value="1"/>
</dbReference>
<dbReference type="PIRSF" id="PIRSF036424">
    <property type="entry name" value="eIF3b"/>
    <property type="match status" value="1"/>
</dbReference>
<dbReference type="SMART" id="SM00360">
    <property type="entry name" value="RRM"/>
    <property type="match status" value="1"/>
</dbReference>
<dbReference type="SUPFAM" id="SSF54928">
    <property type="entry name" value="RNA-binding domain, RBD"/>
    <property type="match status" value="1"/>
</dbReference>
<dbReference type="SUPFAM" id="SSF69322">
    <property type="entry name" value="Tricorn protease domain 2"/>
    <property type="match status" value="1"/>
</dbReference>
<dbReference type="PROSITE" id="PS50102">
    <property type="entry name" value="RRM"/>
    <property type="match status" value="1"/>
</dbReference>
<comment type="function">
    <text evidence="2">RNA-binding component of the eukaryotic translation initiation factor 3 (eIF-3) complex, which is involved in protein synthesis of a specialized repertoire of mRNAs and, together with other initiation factors, stimulates binding of mRNA and methionyl-tRNAi to the 40S ribosome. The eIF-3 complex specifically targets and initiates translation of a subset of mRNAs involved in cell proliferation.</text>
</comment>
<comment type="subunit">
    <text evidence="1 2">Component of the eukaryotic translation initiation factor 3 (eIF-3) complex. The eIF-3 complex interacts with pix. Interacts with mxt (By similarity).</text>
</comment>
<comment type="subcellular location">
    <subcellularLocation>
        <location evidence="2">Cytoplasm</location>
    </subcellularLocation>
</comment>
<comment type="similarity">
    <text evidence="2">Belongs to the eIF-3 subunit B family.</text>
</comment>